<evidence type="ECO:0000255" key="1">
    <source>
        <dbReference type="HAMAP-Rule" id="MF_01148"/>
    </source>
</evidence>
<evidence type="ECO:0000305" key="2"/>
<proteinExistence type="inferred from homology"/>
<accession>Q8D124</accession>
<accession>Q0WDR6</accession>
<accession>Q8ZDF2</accession>
<comment type="function">
    <text evidence="1">Catalyzes the phospholipid dependent N-acylation of the N-terminal cysteine of apolipoprotein, the last step in lipoprotein maturation.</text>
</comment>
<comment type="catalytic activity">
    <reaction evidence="1">
        <text>N-terminal S-1,2-diacyl-sn-glyceryl-L-cysteinyl-[lipoprotein] + a glycerophospholipid = N-acyl-S-1,2-diacyl-sn-glyceryl-L-cysteinyl-[lipoprotein] + a 2-acyl-sn-glycero-3-phospholipid + H(+)</text>
        <dbReference type="Rhea" id="RHEA:48228"/>
        <dbReference type="Rhea" id="RHEA-COMP:14681"/>
        <dbReference type="Rhea" id="RHEA-COMP:14684"/>
        <dbReference type="ChEBI" id="CHEBI:15378"/>
        <dbReference type="ChEBI" id="CHEBI:136912"/>
        <dbReference type="ChEBI" id="CHEBI:140656"/>
        <dbReference type="ChEBI" id="CHEBI:140657"/>
        <dbReference type="ChEBI" id="CHEBI:140660"/>
        <dbReference type="EC" id="2.3.1.269"/>
    </reaction>
</comment>
<comment type="pathway">
    <text evidence="1">Protein modification; lipoprotein biosynthesis (N-acyl transfer).</text>
</comment>
<comment type="subcellular location">
    <subcellularLocation>
        <location evidence="1">Cell inner membrane</location>
        <topology evidence="1">Multi-pass membrane protein</topology>
    </subcellularLocation>
</comment>
<comment type="similarity">
    <text evidence="1">Belongs to the CN hydrolase family. Apolipoprotein N-acyltransferase subfamily.</text>
</comment>
<comment type="sequence caution" evidence="2">
    <conflict type="erroneous initiation">
        <sequence resource="EMBL-CDS" id="AAM84767"/>
    </conflict>
</comment>
<comment type="sequence caution" evidence="2">
    <conflict type="erroneous initiation">
        <sequence resource="EMBL-CDS" id="AAS61343"/>
    </conflict>
</comment>
<name>LNT_YERPE</name>
<sequence>MSIALFLQRQWVRALLALFFGACGTLAYSPFDHWPAAIVSLFGLLSLTLNRTTKQATFIGFCWGMGLFGSGINWVYVSISEFGGMPTAINIVLVILLAAYLSLYTMLFAGLLARLCPKATWWRLAIAAPVLWQLTEFLRGWVLTGFPWLQFGYSQINGPLRGIAPLLGVDGITFILMAISGLLVYACYQRRIVAAIIALALLLLPWPLRQIQWFTPEPERAVNIAMVQGNIAQSMKWDPKALITTLQIYLDETRPFMGKAPIIIWPESAIPDIETDQNTFLTMIDGLMRANHSSLITGIVDAKRQPEGQGYQFFNSIIVLGDKDTYQYPTRNRYSKHHLVPFGEYVPLESLLRPLAPLFNLPMSSFNRGDYVQPPLTIAGFNLTAAICYEIVLGQQVRDNFRPETDFLLTISNDAWFGHSIGPWQHFQMARMRALELGRPLLRSTNNGITAAIGPSGEILAQIPQFTQQVLEVKVTPTTGITPYARFGSWPMWIITLVLGAFTLYCAIRGRSDKH</sequence>
<gene>
    <name evidence="1" type="primary">lnt</name>
    <name type="ordered locus">YPO2616</name>
    <name type="ordered locus">y1190</name>
    <name type="ordered locus">YP_1097</name>
</gene>
<reference key="1">
    <citation type="journal article" date="2001" name="Nature">
        <title>Genome sequence of Yersinia pestis, the causative agent of plague.</title>
        <authorList>
            <person name="Parkhill J."/>
            <person name="Wren B.W."/>
            <person name="Thomson N.R."/>
            <person name="Titball R.W."/>
            <person name="Holden M.T.G."/>
            <person name="Prentice M.B."/>
            <person name="Sebaihia M."/>
            <person name="James K.D."/>
            <person name="Churcher C.M."/>
            <person name="Mungall K.L."/>
            <person name="Baker S."/>
            <person name="Basham D."/>
            <person name="Bentley S.D."/>
            <person name="Brooks K."/>
            <person name="Cerdeno-Tarraga A.-M."/>
            <person name="Chillingworth T."/>
            <person name="Cronin A."/>
            <person name="Davies R.M."/>
            <person name="Davis P."/>
            <person name="Dougan G."/>
            <person name="Feltwell T."/>
            <person name="Hamlin N."/>
            <person name="Holroyd S."/>
            <person name="Jagels K."/>
            <person name="Karlyshev A.V."/>
            <person name="Leather S."/>
            <person name="Moule S."/>
            <person name="Oyston P.C.F."/>
            <person name="Quail M.A."/>
            <person name="Rutherford K.M."/>
            <person name="Simmonds M."/>
            <person name="Skelton J."/>
            <person name="Stevens K."/>
            <person name="Whitehead S."/>
            <person name="Barrell B.G."/>
        </authorList>
    </citation>
    <scope>NUCLEOTIDE SEQUENCE [LARGE SCALE GENOMIC DNA]</scope>
    <source>
        <strain>CO-92 / Biovar Orientalis</strain>
    </source>
</reference>
<reference key="2">
    <citation type="journal article" date="2002" name="J. Bacteriol.">
        <title>Genome sequence of Yersinia pestis KIM.</title>
        <authorList>
            <person name="Deng W."/>
            <person name="Burland V."/>
            <person name="Plunkett G. III"/>
            <person name="Boutin A."/>
            <person name="Mayhew G.F."/>
            <person name="Liss P."/>
            <person name="Perna N.T."/>
            <person name="Rose D.J."/>
            <person name="Mau B."/>
            <person name="Zhou S."/>
            <person name="Schwartz D.C."/>
            <person name="Fetherston J.D."/>
            <person name="Lindler L.E."/>
            <person name="Brubaker R.R."/>
            <person name="Plano G.V."/>
            <person name="Straley S.C."/>
            <person name="McDonough K.A."/>
            <person name="Nilles M.L."/>
            <person name="Matson J.S."/>
            <person name="Blattner F.R."/>
            <person name="Perry R.D."/>
        </authorList>
    </citation>
    <scope>NUCLEOTIDE SEQUENCE [LARGE SCALE GENOMIC DNA]</scope>
    <source>
        <strain>KIM10+ / Biovar Mediaevalis</strain>
    </source>
</reference>
<reference key="3">
    <citation type="journal article" date="2004" name="DNA Res.">
        <title>Complete genome sequence of Yersinia pestis strain 91001, an isolate avirulent to humans.</title>
        <authorList>
            <person name="Song Y."/>
            <person name="Tong Z."/>
            <person name="Wang J."/>
            <person name="Wang L."/>
            <person name="Guo Z."/>
            <person name="Han Y."/>
            <person name="Zhang J."/>
            <person name="Pei D."/>
            <person name="Zhou D."/>
            <person name="Qin H."/>
            <person name="Pang X."/>
            <person name="Han Y."/>
            <person name="Zhai J."/>
            <person name="Li M."/>
            <person name="Cui B."/>
            <person name="Qi Z."/>
            <person name="Jin L."/>
            <person name="Dai R."/>
            <person name="Chen F."/>
            <person name="Li S."/>
            <person name="Ye C."/>
            <person name="Du Z."/>
            <person name="Lin W."/>
            <person name="Wang J."/>
            <person name="Yu J."/>
            <person name="Yang H."/>
            <person name="Wang J."/>
            <person name="Huang P."/>
            <person name="Yang R."/>
        </authorList>
    </citation>
    <scope>NUCLEOTIDE SEQUENCE [LARGE SCALE GENOMIC DNA]</scope>
    <source>
        <strain>91001 / Biovar Mediaevalis</strain>
    </source>
</reference>
<feature type="chain" id="PRO_0000178113" description="Apolipoprotein N-acyltransferase">
    <location>
        <begin position="1"/>
        <end position="515"/>
    </location>
</feature>
<feature type="transmembrane region" description="Helical" evidence="1">
    <location>
        <begin position="14"/>
        <end position="34"/>
    </location>
</feature>
<feature type="transmembrane region" description="Helical" evidence="1">
    <location>
        <begin position="59"/>
        <end position="79"/>
    </location>
</feature>
<feature type="transmembrane region" description="Helical" evidence="1">
    <location>
        <begin position="91"/>
        <end position="111"/>
    </location>
</feature>
<feature type="transmembrane region" description="Helical" evidence="1">
    <location>
        <begin position="124"/>
        <end position="144"/>
    </location>
</feature>
<feature type="transmembrane region" description="Helical" evidence="1">
    <location>
        <begin position="163"/>
        <end position="183"/>
    </location>
</feature>
<feature type="transmembrane region" description="Helical" evidence="1">
    <location>
        <begin position="192"/>
        <end position="212"/>
    </location>
</feature>
<feature type="transmembrane region" description="Helical" evidence="1">
    <location>
        <begin position="488"/>
        <end position="508"/>
    </location>
</feature>
<feature type="domain" description="CN hydrolase" evidence="1">
    <location>
        <begin position="227"/>
        <end position="477"/>
    </location>
</feature>
<feature type="active site" description="Proton acceptor" evidence="1">
    <location>
        <position position="267"/>
    </location>
</feature>
<feature type="active site" evidence="1">
    <location>
        <position position="336"/>
    </location>
</feature>
<feature type="active site" description="Nucleophile" evidence="1">
    <location>
        <position position="388"/>
    </location>
</feature>
<keyword id="KW-0012">Acyltransferase</keyword>
<keyword id="KW-0997">Cell inner membrane</keyword>
<keyword id="KW-1003">Cell membrane</keyword>
<keyword id="KW-0472">Membrane</keyword>
<keyword id="KW-1185">Reference proteome</keyword>
<keyword id="KW-0808">Transferase</keyword>
<keyword id="KW-0812">Transmembrane</keyword>
<keyword id="KW-1133">Transmembrane helix</keyword>
<protein>
    <recommendedName>
        <fullName evidence="1">Apolipoprotein N-acyltransferase</fullName>
        <shortName evidence="1">ALP N-acyltransferase</shortName>
        <ecNumber evidence="1">2.3.1.269</ecNumber>
    </recommendedName>
</protein>
<organism>
    <name type="scientific">Yersinia pestis</name>
    <dbReference type="NCBI Taxonomy" id="632"/>
    <lineage>
        <taxon>Bacteria</taxon>
        <taxon>Pseudomonadati</taxon>
        <taxon>Pseudomonadota</taxon>
        <taxon>Gammaproteobacteria</taxon>
        <taxon>Enterobacterales</taxon>
        <taxon>Yersiniaceae</taxon>
        <taxon>Yersinia</taxon>
    </lineage>
</organism>
<dbReference type="EC" id="2.3.1.269" evidence="1"/>
<dbReference type="EMBL" id="AL590842">
    <property type="protein sequence ID" value="CAL21239.1"/>
    <property type="molecule type" value="Genomic_DNA"/>
</dbReference>
<dbReference type="EMBL" id="AE009952">
    <property type="protein sequence ID" value="AAM84767.1"/>
    <property type="status" value="ALT_INIT"/>
    <property type="molecule type" value="Genomic_DNA"/>
</dbReference>
<dbReference type="EMBL" id="AE017042">
    <property type="protein sequence ID" value="AAS61343.1"/>
    <property type="status" value="ALT_INIT"/>
    <property type="molecule type" value="Genomic_DNA"/>
</dbReference>
<dbReference type="PIR" id="AD0319">
    <property type="entry name" value="AD0319"/>
</dbReference>
<dbReference type="RefSeq" id="WP_002210341.1">
    <property type="nucleotide sequence ID" value="NZ_WUCM01000011.1"/>
</dbReference>
<dbReference type="RefSeq" id="YP_002347572.1">
    <property type="nucleotide sequence ID" value="NC_003143.1"/>
</dbReference>
<dbReference type="SMR" id="Q8D124"/>
<dbReference type="STRING" id="214092.YPO2616"/>
<dbReference type="PaxDb" id="214092-YPO2616"/>
<dbReference type="DNASU" id="1146137"/>
<dbReference type="EnsemblBacteria" id="AAS61343">
    <property type="protein sequence ID" value="AAS61343"/>
    <property type="gene ID" value="YP_1097"/>
</dbReference>
<dbReference type="GeneID" id="57976079"/>
<dbReference type="KEGG" id="ype:YPO2616"/>
<dbReference type="KEGG" id="ypk:y1190"/>
<dbReference type="KEGG" id="ypm:YP_1097"/>
<dbReference type="PATRIC" id="fig|214092.21.peg.3047"/>
<dbReference type="eggNOG" id="COG0815">
    <property type="taxonomic scope" value="Bacteria"/>
</dbReference>
<dbReference type="HOGENOM" id="CLU_019563_3_0_6"/>
<dbReference type="OMA" id="GICYESA"/>
<dbReference type="OrthoDB" id="9804277at2"/>
<dbReference type="UniPathway" id="UPA00666"/>
<dbReference type="Proteomes" id="UP000000815">
    <property type="component" value="Chromosome"/>
</dbReference>
<dbReference type="Proteomes" id="UP000001019">
    <property type="component" value="Chromosome"/>
</dbReference>
<dbReference type="Proteomes" id="UP000002490">
    <property type="component" value="Chromosome"/>
</dbReference>
<dbReference type="GO" id="GO:0005886">
    <property type="term" value="C:plasma membrane"/>
    <property type="evidence" value="ECO:0007669"/>
    <property type="project" value="UniProtKB-SubCell"/>
</dbReference>
<dbReference type="GO" id="GO:0016410">
    <property type="term" value="F:N-acyltransferase activity"/>
    <property type="evidence" value="ECO:0007669"/>
    <property type="project" value="UniProtKB-UniRule"/>
</dbReference>
<dbReference type="GO" id="GO:0042158">
    <property type="term" value="P:lipoprotein biosynthetic process"/>
    <property type="evidence" value="ECO:0007669"/>
    <property type="project" value="UniProtKB-UniRule"/>
</dbReference>
<dbReference type="CDD" id="cd07571">
    <property type="entry name" value="ALP_N-acyl_transferase"/>
    <property type="match status" value="1"/>
</dbReference>
<dbReference type="Gene3D" id="3.60.110.10">
    <property type="entry name" value="Carbon-nitrogen hydrolase"/>
    <property type="match status" value="1"/>
</dbReference>
<dbReference type="HAMAP" id="MF_01148">
    <property type="entry name" value="Lnt"/>
    <property type="match status" value="1"/>
</dbReference>
<dbReference type="InterPro" id="IPR004563">
    <property type="entry name" value="Apolipo_AcylTrfase"/>
</dbReference>
<dbReference type="InterPro" id="IPR003010">
    <property type="entry name" value="C-N_Hydrolase"/>
</dbReference>
<dbReference type="InterPro" id="IPR036526">
    <property type="entry name" value="C-N_Hydrolase_sf"/>
</dbReference>
<dbReference type="InterPro" id="IPR045378">
    <property type="entry name" value="LNT_N"/>
</dbReference>
<dbReference type="NCBIfam" id="TIGR00546">
    <property type="entry name" value="lnt"/>
    <property type="match status" value="1"/>
</dbReference>
<dbReference type="PANTHER" id="PTHR38686">
    <property type="entry name" value="APOLIPOPROTEIN N-ACYLTRANSFERASE"/>
    <property type="match status" value="1"/>
</dbReference>
<dbReference type="PANTHER" id="PTHR38686:SF1">
    <property type="entry name" value="APOLIPOPROTEIN N-ACYLTRANSFERASE"/>
    <property type="match status" value="1"/>
</dbReference>
<dbReference type="Pfam" id="PF00795">
    <property type="entry name" value="CN_hydrolase"/>
    <property type="match status" value="1"/>
</dbReference>
<dbReference type="Pfam" id="PF20154">
    <property type="entry name" value="LNT_N"/>
    <property type="match status" value="1"/>
</dbReference>
<dbReference type="SUPFAM" id="SSF56317">
    <property type="entry name" value="Carbon-nitrogen hydrolase"/>
    <property type="match status" value="1"/>
</dbReference>
<dbReference type="PROSITE" id="PS50263">
    <property type="entry name" value="CN_HYDROLASE"/>
    <property type="match status" value="1"/>
</dbReference>